<organism>
    <name type="scientific">Dictyostelium discoideum</name>
    <name type="common">Social amoeba</name>
    <dbReference type="NCBI Taxonomy" id="44689"/>
    <lineage>
        <taxon>Eukaryota</taxon>
        <taxon>Amoebozoa</taxon>
        <taxon>Evosea</taxon>
        <taxon>Eumycetozoa</taxon>
        <taxon>Dictyostelia</taxon>
        <taxon>Dictyosteliales</taxon>
        <taxon>Dictyosteliaceae</taxon>
        <taxon>Dictyostelium</taxon>
    </lineage>
</organism>
<feature type="chain" id="PRO_0000329388" description="Myb-like protein O">
    <location>
        <begin position="1"/>
        <end position="1327"/>
    </location>
</feature>
<feature type="domain" description="HTH myb-type" evidence="2">
    <location>
        <begin position="897"/>
        <end position="953"/>
    </location>
</feature>
<feature type="domain" description="Myb-like 1" evidence="1">
    <location>
        <begin position="959"/>
        <end position="1010"/>
    </location>
</feature>
<feature type="domain" description="Myb-like 2" evidence="1">
    <location>
        <begin position="1268"/>
        <end position="1316"/>
    </location>
</feature>
<feature type="DNA-binding region" description="H-T-H motif" evidence="2">
    <location>
        <begin position="925"/>
        <end position="949"/>
    </location>
</feature>
<feature type="region of interest" description="Disordered" evidence="3">
    <location>
        <begin position="131"/>
        <end position="153"/>
    </location>
</feature>
<feature type="region of interest" description="Disordered" evidence="3">
    <location>
        <begin position="263"/>
        <end position="390"/>
    </location>
</feature>
<feature type="region of interest" description="Disordered" evidence="3">
    <location>
        <begin position="504"/>
        <end position="668"/>
    </location>
</feature>
<feature type="region of interest" description="Disordered" evidence="3">
    <location>
        <begin position="717"/>
        <end position="770"/>
    </location>
</feature>
<feature type="region of interest" description="Disordered" evidence="3">
    <location>
        <begin position="1061"/>
        <end position="1122"/>
    </location>
</feature>
<feature type="region of interest" description="Disordered" evidence="3">
    <location>
        <begin position="1144"/>
        <end position="1168"/>
    </location>
</feature>
<feature type="compositionally biased region" description="Low complexity" evidence="3">
    <location>
        <begin position="131"/>
        <end position="142"/>
    </location>
</feature>
<feature type="compositionally biased region" description="Acidic residues" evidence="3">
    <location>
        <begin position="263"/>
        <end position="283"/>
    </location>
</feature>
<feature type="compositionally biased region" description="Low complexity" evidence="3">
    <location>
        <begin position="322"/>
        <end position="353"/>
    </location>
</feature>
<feature type="compositionally biased region" description="Acidic residues" evidence="3">
    <location>
        <begin position="356"/>
        <end position="374"/>
    </location>
</feature>
<feature type="compositionally biased region" description="Low complexity" evidence="3">
    <location>
        <begin position="511"/>
        <end position="532"/>
    </location>
</feature>
<feature type="compositionally biased region" description="Basic residues" evidence="3">
    <location>
        <begin position="533"/>
        <end position="542"/>
    </location>
</feature>
<feature type="compositionally biased region" description="Basic and acidic residues" evidence="3">
    <location>
        <begin position="543"/>
        <end position="554"/>
    </location>
</feature>
<feature type="compositionally biased region" description="Basic residues" evidence="3">
    <location>
        <begin position="555"/>
        <end position="577"/>
    </location>
</feature>
<feature type="compositionally biased region" description="Acidic residues" evidence="3">
    <location>
        <begin position="585"/>
        <end position="606"/>
    </location>
</feature>
<feature type="compositionally biased region" description="Gly residues" evidence="3">
    <location>
        <begin position="607"/>
        <end position="619"/>
    </location>
</feature>
<feature type="compositionally biased region" description="Acidic residues" evidence="3">
    <location>
        <begin position="624"/>
        <end position="633"/>
    </location>
</feature>
<feature type="compositionally biased region" description="Low complexity" evidence="3">
    <location>
        <begin position="646"/>
        <end position="668"/>
    </location>
</feature>
<feature type="compositionally biased region" description="Low complexity" evidence="3">
    <location>
        <begin position="722"/>
        <end position="732"/>
    </location>
</feature>
<feature type="compositionally biased region" description="Acidic residues" evidence="3">
    <location>
        <begin position="754"/>
        <end position="770"/>
    </location>
</feature>
<feature type="compositionally biased region" description="Low complexity" evidence="3">
    <location>
        <begin position="1061"/>
        <end position="1118"/>
    </location>
</feature>
<feature type="compositionally biased region" description="Low complexity" evidence="3">
    <location>
        <begin position="1144"/>
        <end position="1160"/>
    </location>
</feature>
<gene>
    <name type="primary">mybO</name>
    <name type="ORF">DDB_G0290787</name>
</gene>
<protein>
    <recommendedName>
        <fullName>Myb-like protein O</fullName>
    </recommendedName>
</protein>
<reference key="1">
    <citation type="journal article" date="2005" name="Nature">
        <title>The genome of the social amoeba Dictyostelium discoideum.</title>
        <authorList>
            <person name="Eichinger L."/>
            <person name="Pachebat J.A."/>
            <person name="Gloeckner G."/>
            <person name="Rajandream M.A."/>
            <person name="Sucgang R."/>
            <person name="Berriman M."/>
            <person name="Song J."/>
            <person name="Olsen R."/>
            <person name="Szafranski K."/>
            <person name="Xu Q."/>
            <person name="Tunggal B."/>
            <person name="Kummerfeld S."/>
            <person name="Madera M."/>
            <person name="Konfortov B.A."/>
            <person name="Rivero F."/>
            <person name="Bankier A.T."/>
            <person name="Lehmann R."/>
            <person name="Hamlin N."/>
            <person name="Davies R."/>
            <person name="Gaudet P."/>
            <person name="Fey P."/>
            <person name="Pilcher K."/>
            <person name="Chen G."/>
            <person name="Saunders D."/>
            <person name="Sodergren E.J."/>
            <person name="Davis P."/>
            <person name="Kerhornou A."/>
            <person name="Nie X."/>
            <person name="Hall N."/>
            <person name="Anjard C."/>
            <person name="Hemphill L."/>
            <person name="Bason N."/>
            <person name="Farbrother P."/>
            <person name="Desany B."/>
            <person name="Just E."/>
            <person name="Morio T."/>
            <person name="Rost R."/>
            <person name="Churcher C.M."/>
            <person name="Cooper J."/>
            <person name="Haydock S."/>
            <person name="van Driessche N."/>
            <person name="Cronin A."/>
            <person name="Goodhead I."/>
            <person name="Muzny D.M."/>
            <person name="Mourier T."/>
            <person name="Pain A."/>
            <person name="Lu M."/>
            <person name="Harper D."/>
            <person name="Lindsay R."/>
            <person name="Hauser H."/>
            <person name="James K.D."/>
            <person name="Quiles M."/>
            <person name="Madan Babu M."/>
            <person name="Saito T."/>
            <person name="Buchrieser C."/>
            <person name="Wardroper A."/>
            <person name="Felder M."/>
            <person name="Thangavelu M."/>
            <person name="Johnson D."/>
            <person name="Knights A."/>
            <person name="Loulseged H."/>
            <person name="Mungall K.L."/>
            <person name="Oliver K."/>
            <person name="Price C."/>
            <person name="Quail M.A."/>
            <person name="Urushihara H."/>
            <person name="Hernandez J."/>
            <person name="Rabbinowitsch E."/>
            <person name="Steffen D."/>
            <person name="Sanders M."/>
            <person name="Ma J."/>
            <person name="Kohara Y."/>
            <person name="Sharp S."/>
            <person name="Simmonds M.N."/>
            <person name="Spiegler S."/>
            <person name="Tivey A."/>
            <person name="Sugano S."/>
            <person name="White B."/>
            <person name="Walker D."/>
            <person name="Woodward J.R."/>
            <person name="Winckler T."/>
            <person name="Tanaka Y."/>
            <person name="Shaulsky G."/>
            <person name="Schleicher M."/>
            <person name="Weinstock G.M."/>
            <person name="Rosenthal A."/>
            <person name="Cox E.C."/>
            <person name="Chisholm R.L."/>
            <person name="Gibbs R.A."/>
            <person name="Loomis W.F."/>
            <person name="Platzer M."/>
            <person name="Kay R.R."/>
            <person name="Williams J.G."/>
            <person name="Dear P.H."/>
            <person name="Noegel A.A."/>
            <person name="Barrell B.G."/>
            <person name="Kuspa A."/>
        </authorList>
    </citation>
    <scope>NUCLEOTIDE SEQUENCE [LARGE SCALE GENOMIC DNA]</scope>
    <source>
        <strain>AX4</strain>
    </source>
</reference>
<name>MYBO_DICDI</name>
<evidence type="ECO:0000255" key="1">
    <source>
        <dbReference type="PROSITE-ProRule" id="PRU00133"/>
    </source>
</evidence>
<evidence type="ECO:0000255" key="2">
    <source>
        <dbReference type="PROSITE-ProRule" id="PRU00625"/>
    </source>
</evidence>
<evidence type="ECO:0000256" key="3">
    <source>
        <dbReference type="SAM" id="MobiDB-lite"/>
    </source>
</evidence>
<keyword id="KW-0238">DNA-binding</keyword>
<keyword id="KW-0539">Nucleus</keyword>
<keyword id="KW-1185">Reference proteome</keyword>
<keyword id="KW-0677">Repeat</keyword>
<keyword id="KW-0804">Transcription</keyword>
<keyword id="KW-0805">Transcription regulation</keyword>
<dbReference type="EMBL" id="AAFI02000171">
    <property type="protein sequence ID" value="EAL62027.1"/>
    <property type="molecule type" value="Genomic_DNA"/>
</dbReference>
<dbReference type="RefSeq" id="XP_635530.1">
    <property type="nucleotide sequence ID" value="XM_630438.1"/>
</dbReference>
<dbReference type="SMR" id="Q54FL0"/>
<dbReference type="FunCoup" id="Q54FL0">
    <property type="interactions" value="480"/>
</dbReference>
<dbReference type="STRING" id="44689.Q54FL0"/>
<dbReference type="PaxDb" id="44689-DDB0220516"/>
<dbReference type="EnsemblProtists" id="EAL62027">
    <property type="protein sequence ID" value="EAL62027"/>
    <property type="gene ID" value="DDB_G0290787"/>
</dbReference>
<dbReference type="GeneID" id="8627827"/>
<dbReference type="KEGG" id="ddi:DDB_G0290787"/>
<dbReference type="dictyBase" id="DDB_G0290787">
    <property type="gene designation" value="mybO"/>
</dbReference>
<dbReference type="VEuPathDB" id="AmoebaDB:DDB_G0290787"/>
<dbReference type="eggNOG" id="ENOG502RSP8">
    <property type="taxonomic scope" value="Eukaryota"/>
</dbReference>
<dbReference type="HOGENOM" id="CLU_259397_0_0_1"/>
<dbReference type="InParanoid" id="Q54FL0"/>
<dbReference type="OMA" id="FKTMEII"/>
<dbReference type="PRO" id="PR:Q54FL0"/>
<dbReference type="Proteomes" id="UP000002195">
    <property type="component" value="Chromosome 5"/>
</dbReference>
<dbReference type="GO" id="GO:0005634">
    <property type="term" value="C:nucleus"/>
    <property type="evidence" value="ECO:0000318"/>
    <property type="project" value="GO_Central"/>
</dbReference>
<dbReference type="GO" id="GO:0003677">
    <property type="term" value="F:DNA binding"/>
    <property type="evidence" value="ECO:0007669"/>
    <property type="project" value="UniProtKB-KW"/>
</dbReference>
<dbReference type="GO" id="GO:0003712">
    <property type="term" value="F:transcription coregulator activity"/>
    <property type="evidence" value="ECO:0000318"/>
    <property type="project" value="GO_Central"/>
</dbReference>
<dbReference type="GO" id="GO:0006355">
    <property type="term" value="P:regulation of DNA-templated transcription"/>
    <property type="evidence" value="ECO:0000318"/>
    <property type="project" value="GO_Central"/>
</dbReference>
<dbReference type="CDD" id="cd11660">
    <property type="entry name" value="SANT_TRF"/>
    <property type="match status" value="1"/>
</dbReference>
<dbReference type="FunFam" id="1.10.10.60:FF:000761">
    <property type="match status" value="1"/>
</dbReference>
<dbReference type="Gene3D" id="1.10.10.60">
    <property type="entry name" value="Homeodomain-like"/>
    <property type="match status" value="2"/>
</dbReference>
<dbReference type="InterPro" id="IPR009057">
    <property type="entry name" value="Homeodomain-like_sf"/>
</dbReference>
<dbReference type="InterPro" id="IPR017930">
    <property type="entry name" value="Myb_dom"/>
</dbReference>
<dbReference type="InterPro" id="IPR001005">
    <property type="entry name" value="SANT/Myb"/>
</dbReference>
<dbReference type="InterPro" id="IPR052435">
    <property type="entry name" value="YY1-Transcr_Regul"/>
</dbReference>
<dbReference type="PANTHER" id="PTHR16088:SF3">
    <property type="entry name" value="GON-4-LIKE PROTEIN"/>
    <property type="match status" value="1"/>
</dbReference>
<dbReference type="PANTHER" id="PTHR16088">
    <property type="entry name" value="YY1 ASSOCIATED PROTEIN-RELATED"/>
    <property type="match status" value="1"/>
</dbReference>
<dbReference type="Pfam" id="PF21227">
    <property type="entry name" value="Myb_DNA-binding_7"/>
    <property type="match status" value="1"/>
</dbReference>
<dbReference type="SMART" id="SM00717">
    <property type="entry name" value="SANT"/>
    <property type="match status" value="3"/>
</dbReference>
<dbReference type="SUPFAM" id="SSF46689">
    <property type="entry name" value="Homeodomain-like"/>
    <property type="match status" value="2"/>
</dbReference>
<dbReference type="PROSITE" id="PS51294">
    <property type="entry name" value="HTH_MYB"/>
    <property type="match status" value="1"/>
</dbReference>
<dbReference type="PROSITE" id="PS50090">
    <property type="entry name" value="MYB_LIKE"/>
    <property type="match status" value="2"/>
</dbReference>
<sequence>MPTIFQTPTPNIDITLNNSTQFYYSTPQQTSPLQKQQQQQQQQQQQQQQQQQQQTSPIQQQISQQQQISPLQQLLQKQQQQQQSPVHQIHQQLIQQIIPPKQQEKQQEKIQDELKIQSTTPVINNNINNINNNINTTNNNNKTNERQNNEESNQISTITTTGTTTGTTATIISPNKLDIEQFVKGNEKVSRRTRAHVSLQNLDFEELDAYFDTHVSTIPLEEATSLSQSNHFGFLDTNIYNDEYKQFITNLKSGGFGDINIFEEEDDEDYIPPEEEEDDDEDNINVYNDKNIDYSTNITSKNNSNEDYNSNEDHNSNDENDYNNTANNINNNNIGDESDNNNNNNNNINNNSNKGDDDDDDDDDNNDDDDDDNDISYVDLNNDGENDESSNEMAALVNDYLENEAKEINGQNGFFKLLDLNLGEQFKQVIAPLPLNQITSTIQQQQQNDFILPIENFIGISNSVLVSPIPDFDPNFKPDSKIEKKLSSITLNGTQLNNLYITTPPQQQQQSSSSINSSNTMSSSSSSSSLSKNKLKKKKKEEKRKEEKRKEEKRKEKKRKKRQSITISKFKKNKKKTNGGFSSDSESDSSSDDSDDSDFYYSDIEEGGGGNGNGSGSGVGVVDSDNEEGDSSSDDFSKKKKRKLYHTNNSNNSIENNNNNNNNNNHESTSNSIFTLTLEQIQEVKLQIAQHYQLLIQVYLLMRIQTNPENFNLNLKKKKKIQSSSSSSSSTIKEIDSAEDDEDNYNNNNNNINNDDEDDNNNNNEDDNDDIEKYYSTYRNIVNRKPPTDMVQHNGMIDSVKRMLDQLFNYHQKHVENQIYSKIIFQQMESPSKVFTRSVKKALVPHVTSQLFDSEAIKLYPYLNELIVEDPIPSFKTMEIILSIFKDHFSESYNYRNVKLNQLKFTGGEDLLLLMGVKRFGTFNWRIIQKRYFPNKTDDQLFHRYKNLLSHSSANNQLKQYLNGAKFTKEEEEKLDGAIKIHGLKWDIISRDYLHWKEPAMLKKFYEKREKQVEKKNLFERRQLKKEKRNLERQRKQEQQRLLELEMEQDEIERQKQLEFNSTNNNNNNNNNNNNNNNNNNNNNNNNNNNNNNNNNNNNNNNENSSTNSNNDSGNENNYEFGDNETEILNDNIEISTTIDINNPIIENNSSTSTTRETSPVQMNPCPISSLSITNQQFQLQQDQYQLQQYQFYQQQQQYNQQQYEQQQQQQQQQQQQQQQQQQQQQQQQQQQQQHEQQQNEQQRTNNLSTETIIKSDNLNIVDGILIKWTREEDRIILITVKEKGTVDNEIWKSLSDTKIQDKTPDQIMYRYLQLLELIKRSQFAKQ</sequence>
<accession>Q54FL0</accession>
<proteinExistence type="inferred from homology"/>
<comment type="subcellular location">
    <subcellularLocation>
        <location evidence="2">Nucleus</location>
    </subcellularLocation>
</comment>